<comment type="function">
    <text evidence="1">Catalyzes the formation of the alpha-1,6-glucosidic linkages in glycogen by scission of a 1,4-alpha-linked oligosaccharide from growing alpha-1,4-glucan chains and the subsequent attachment of the oligosaccharide to the alpha-1,6 position.</text>
</comment>
<comment type="catalytic activity">
    <reaction evidence="1">
        <text>Transfers a segment of a (1-&gt;4)-alpha-D-glucan chain to a primary hydroxy group in a similar glucan chain.</text>
        <dbReference type="EC" id="2.4.1.18"/>
    </reaction>
</comment>
<comment type="pathway">
    <text evidence="1">Glycan biosynthesis; glycogen biosynthesis.</text>
</comment>
<comment type="subunit">
    <text evidence="1">Monomer.</text>
</comment>
<comment type="similarity">
    <text evidence="1">Belongs to the glycosyl hydrolase 13 family. GlgB subfamily.</text>
</comment>
<dbReference type="EC" id="2.4.1.18" evidence="1"/>
<dbReference type="EMBL" id="CP000746">
    <property type="protein sequence ID" value="ABR74712.1"/>
    <property type="molecule type" value="Genomic_DNA"/>
</dbReference>
<dbReference type="RefSeq" id="WP_012073089.1">
    <property type="nucleotide sequence ID" value="NC_009655.1"/>
</dbReference>
<dbReference type="SMR" id="A6VP15"/>
<dbReference type="STRING" id="339671.Asuc_1352"/>
<dbReference type="CAZy" id="CBM48">
    <property type="family name" value="Carbohydrate-Binding Module Family 48"/>
</dbReference>
<dbReference type="CAZy" id="GH13">
    <property type="family name" value="Glycoside Hydrolase Family 13"/>
</dbReference>
<dbReference type="KEGG" id="asu:Asuc_1352"/>
<dbReference type="eggNOG" id="COG0296">
    <property type="taxonomic scope" value="Bacteria"/>
</dbReference>
<dbReference type="HOGENOM" id="CLU_004245_3_2_6"/>
<dbReference type="OrthoDB" id="9800174at2"/>
<dbReference type="UniPathway" id="UPA00164"/>
<dbReference type="Proteomes" id="UP000001114">
    <property type="component" value="Chromosome"/>
</dbReference>
<dbReference type="GO" id="GO:0005829">
    <property type="term" value="C:cytosol"/>
    <property type="evidence" value="ECO:0007669"/>
    <property type="project" value="TreeGrafter"/>
</dbReference>
<dbReference type="GO" id="GO:0003844">
    <property type="term" value="F:1,4-alpha-glucan branching enzyme activity"/>
    <property type="evidence" value="ECO:0007669"/>
    <property type="project" value="UniProtKB-UniRule"/>
</dbReference>
<dbReference type="GO" id="GO:0043169">
    <property type="term" value="F:cation binding"/>
    <property type="evidence" value="ECO:0007669"/>
    <property type="project" value="InterPro"/>
</dbReference>
<dbReference type="GO" id="GO:0004553">
    <property type="term" value="F:hydrolase activity, hydrolyzing O-glycosyl compounds"/>
    <property type="evidence" value="ECO:0007669"/>
    <property type="project" value="InterPro"/>
</dbReference>
<dbReference type="GO" id="GO:0005978">
    <property type="term" value="P:glycogen biosynthetic process"/>
    <property type="evidence" value="ECO:0007669"/>
    <property type="project" value="UniProtKB-UniRule"/>
</dbReference>
<dbReference type="CDD" id="cd11322">
    <property type="entry name" value="AmyAc_Glg_BE"/>
    <property type="match status" value="1"/>
</dbReference>
<dbReference type="CDD" id="cd02855">
    <property type="entry name" value="E_set_GBE_prok_N"/>
    <property type="match status" value="1"/>
</dbReference>
<dbReference type="FunFam" id="2.60.40.10:FF:000169">
    <property type="entry name" value="1,4-alpha-glucan branching enzyme GlgB"/>
    <property type="match status" value="1"/>
</dbReference>
<dbReference type="FunFam" id="2.60.40.1180:FF:000002">
    <property type="entry name" value="1,4-alpha-glucan branching enzyme GlgB"/>
    <property type="match status" value="1"/>
</dbReference>
<dbReference type="FunFam" id="3.20.20.80:FF:000003">
    <property type="entry name" value="1,4-alpha-glucan branching enzyme GlgB"/>
    <property type="match status" value="1"/>
</dbReference>
<dbReference type="Gene3D" id="3.20.20.80">
    <property type="entry name" value="Glycosidases"/>
    <property type="match status" value="1"/>
</dbReference>
<dbReference type="Gene3D" id="2.60.40.1180">
    <property type="entry name" value="Golgi alpha-mannosidase II"/>
    <property type="match status" value="1"/>
</dbReference>
<dbReference type="Gene3D" id="2.60.40.10">
    <property type="entry name" value="Immunoglobulins"/>
    <property type="match status" value="2"/>
</dbReference>
<dbReference type="HAMAP" id="MF_00685">
    <property type="entry name" value="GlgB"/>
    <property type="match status" value="1"/>
</dbReference>
<dbReference type="InterPro" id="IPR006048">
    <property type="entry name" value="A-amylase/branching_C"/>
</dbReference>
<dbReference type="InterPro" id="IPR037439">
    <property type="entry name" value="Branching_enzy"/>
</dbReference>
<dbReference type="InterPro" id="IPR006407">
    <property type="entry name" value="GlgB"/>
</dbReference>
<dbReference type="InterPro" id="IPR054169">
    <property type="entry name" value="GlgB_N"/>
</dbReference>
<dbReference type="InterPro" id="IPR044143">
    <property type="entry name" value="GlgB_N_E_set_prok"/>
</dbReference>
<dbReference type="InterPro" id="IPR006047">
    <property type="entry name" value="Glyco_hydro_13_cat_dom"/>
</dbReference>
<dbReference type="InterPro" id="IPR004193">
    <property type="entry name" value="Glyco_hydro_13_N"/>
</dbReference>
<dbReference type="InterPro" id="IPR013780">
    <property type="entry name" value="Glyco_hydro_b"/>
</dbReference>
<dbReference type="InterPro" id="IPR017853">
    <property type="entry name" value="Glycoside_hydrolase_SF"/>
</dbReference>
<dbReference type="InterPro" id="IPR013783">
    <property type="entry name" value="Ig-like_fold"/>
</dbReference>
<dbReference type="InterPro" id="IPR014756">
    <property type="entry name" value="Ig_E-set"/>
</dbReference>
<dbReference type="NCBIfam" id="TIGR01515">
    <property type="entry name" value="branching_enzym"/>
    <property type="match status" value="1"/>
</dbReference>
<dbReference type="NCBIfam" id="NF003811">
    <property type="entry name" value="PRK05402.1"/>
    <property type="match status" value="1"/>
</dbReference>
<dbReference type="NCBIfam" id="NF008967">
    <property type="entry name" value="PRK12313.1"/>
    <property type="match status" value="1"/>
</dbReference>
<dbReference type="PANTHER" id="PTHR43651">
    <property type="entry name" value="1,4-ALPHA-GLUCAN-BRANCHING ENZYME"/>
    <property type="match status" value="1"/>
</dbReference>
<dbReference type="PANTHER" id="PTHR43651:SF3">
    <property type="entry name" value="1,4-ALPHA-GLUCAN-BRANCHING ENZYME"/>
    <property type="match status" value="1"/>
</dbReference>
<dbReference type="Pfam" id="PF00128">
    <property type="entry name" value="Alpha-amylase"/>
    <property type="match status" value="1"/>
</dbReference>
<dbReference type="Pfam" id="PF02806">
    <property type="entry name" value="Alpha-amylase_C"/>
    <property type="match status" value="1"/>
</dbReference>
<dbReference type="Pfam" id="PF02922">
    <property type="entry name" value="CBM_48"/>
    <property type="match status" value="1"/>
</dbReference>
<dbReference type="Pfam" id="PF22019">
    <property type="entry name" value="GlgB_N"/>
    <property type="match status" value="1"/>
</dbReference>
<dbReference type="PIRSF" id="PIRSF000463">
    <property type="entry name" value="GlgB"/>
    <property type="match status" value="1"/>
</dbReference>
<dbReference type="SMART" id="SM00642">
    <property type="entry name" value="Aamy"/>
    <property type="match status" value="1"/>
</dbReference>
<dbReference type="SUPFAM" id="SSF51445">
    <property type="entry name" value="(Trans)glycosidases"/>
    <property type="match status" value="1"/>
</dbReference>
<dbReference type="SUPFAM" id="SSF81296">
    <property type="entry name" value="E set domains"/>
    <property type="match status" value="2"/>
</dbReference>
<dbReference type="SUPFAM" id="SSF51011">
    <property type="entry name" value="Glycosyl hydrolase domain"/>
    <property type="match status" value="1"/>
</dbReference>
<protein>
    <recommendedName>
        <fullName evidence="1">1,4-alpha-glucan branching enzyme GlgB</fullName>
        <ecNumber evidence="1">2.4.1.18</ecNumber>
    </recommendedName>
    <alternativeName>
        <fullName evidence="1">1,4-alpha-D-glucan:1,4-alpha-D-glucan 6-glucosyl-transferase</fullName>
    </alternativeName>
    <alternativeName>
        <fullName evidence="1">Alpha-(1-&gt;4)-glucan branching enzyme</fullName>
    </alternativeName>
    <alternativeName>
        <fullName evidence="1">Glycogen branching enzyme</fullName>
        <shortName evidence="1">BE</shortName>
    </alternativeName>
</protein>
<sequence>MTTFVTQDTINAFFDGRHADPFAVLGMHETDNGIEIRALLPDAGRVVVIDKETQDEVCELSRIDERGFFAGIMPQRNSFFNYQLQVSWGNEVLRIEDPYRFHPMIQELDNWLLAEGSHLRPYEVLGAHFMECDHVSGVNFRLWAPNAKRVSVVGDFNYWDGRRHPMRFHQASGVWELFIPKVALGDLYKFELLDNNNRLRLKSDPYAFAAQLRPDTASQISVLPEIQEMTAARRKANQLDQPISIYEVHLGSWRRNLANNFWLNYDEIADELIPYVKEMGFTHIELLPISEFPFDGSWGYQPIGLYAPTSRFGSPEGFKRFVDKAHAAGINVILDWVPGHFPSDTHGLATFDGTALYEHADPKEGYHQDWNTLIYNYGRHEVKNYLSGNALYWVERFGLDGIRVDAVASMIYRDYSRRDGEWIPNQYGGRENLEAIEFLKHTNYILGTEHPGVMCVAEESTAFAGVTLPPENGGLGFNFKWNMGWMNDTLSYMKLDPIYRQYNHSKLTFGMLYQYSENFVLPLSHDEVVHGKCSLLDKMPGDTWQKFANLRAYYGYMWAYPGKKLLFMGNEFAQGREWNYQESLDWYLLDEFHGGGWHSGVQRLVKDLNKTYQKQSALYQLDTKPEGFEWLVVDDAQNSVFVFERRNAKGEPLIVVSNFTPVPRENYRFGVNVAGSYEEILNTDADIYKGSGLNNGGVIDSEEIESHGKTQSISITVPPLATVYFKLKSARKVASPRKVTKKKTTADGAEATAKNASASKATKVSTKKTVKSSEAKPVKAATKSSVTKVATKKSTDKPTAKATRTKKATVTKTAKASAKTTAKKTKDNA</sequence>
<name>GLGB_ACTSZ</name>
<gene>
    <name evidence="1" type="primary">glgB</name>
    <name type="ordered locus">Asuc_1352</name>
</gene>
<accession>A6VP15</accession>
<evidence type="ECO:0000255" key="1">
    <source>
        <dbReference type="HAMAP-Rule" id="MF_00685"/>
    </source>
</evidence>
<evidence type="ECO:0000256" key="2">
    <source>
        <dbReference type="SAM" id="MobiDB-lite"/>
    </source>
</evidence>
<proteinExistence type="inferred from homology"/>
<keyword id="KW-0119">Carbohydrate metabolism</keyword>
<keyword id="KW-0320">Glycogen biosynthesis</keyword>
<keyword id="KW-0321">Glycogen metabolism</keyword>
<keyword id="KW-0328">Glycosyltransferase</keyword>
<keyword id="KW-1185">Reference proteome</keyword>
<keyword id="KW-0808">Transferase</keyword>
<organism>
    <name type="scientific">Actinobacillus succinogenes (strain ATCC 55618 / DSM 22257 / CCUG 43843 / 130Z)</name>
    <dbReference type="NCBI Taxonomy" id="339671"/>
    <lineage>
        <taxon>Bacteria</taxon>
        <taxon>Pseudomonadati</taxon>
        <taxon>Pseudomonadota</taxon>
        <taxon>Gammaproteobacteria</taxon>
        <taxon>Pasteurellales</taxon>
        <taxon>Pasteurellaceae</taxon>
        <taxon>Actinobacillus</taxon>
    </lineage>
</organism>
<feature type="chain" id="PRO_1000072735" description="1,4-alpha-glucan branching enzyme GlgB">
    <location>
        <begin position="1"/>
        <end position="829"/>
    </location>
</feature>
<feature type="region of interest" description="Disordered" evidence="2">
    <location>
        <begin position="758"/>
        <end position="829"/>
    </location>
</feature>
<feature type="compositionally biased region" description="Low complexity" evidence="2">
    <location>
        <begin position="778"/>
        <end position="789"/>
    </location>
</feature>
<feature type="compositionally biased region" description="Low complexity" evidence="2">
    <location>
        <begin position="810"/>
        <end position="820"/>
    </location>
</feature>
<feature type="active site" description="Nucleophile" evidence="1">
    <location>
        <position position="405"/>
    </location>
</feature>
<feature type="active site" description="Proton donor" evidence="1">
    <location>
        <position position="458"/>
    </location>
</feature>
<reference key="1">
    <citation type="journal article" date="2010" name="BMC Genomics">
        <title>A genomic perspective on the potential of Actinobacillus succinogenes for industrial succinate production.</title>
        <authorList>
            <person name="McKinlay J.B."/>
            <person name="Laivenieks M."/>
            <person name="Schindler B.D."/>
            <person name="McKinlay A.A."/>
            <person name="Siddaramappa S."/>
            <person name="Challacombe J.F."/>
            <person name="Lowry S.R."/>
            <person name="Clum A."/>
            <person name="Lapidus A.L."/>
            <person name="Burkhart K.B."/>
            <person name="Harkins V."/>
            <person name="Vieille C."/>
        </authorList>
    </citation>
    <scope>NUCLEOTIDE SEQUENCE [LARGE SCALE GENOMIC DNA]</scope>
    <source>
        <strain>ATCC 55618 / DSM 22257 / CCUG 43843 / 130Z</strain>
    </source>
</reference>